<proteinExistence type="inferred from homology"/>
<dbReference type="EMBL" id="CP000437">
    <property type="protein sequence ID" value="ABI82267.1"/>
    <property type="molecule type" value="Genomic_DNA"/>
</dbReference>
<dbReference type="RefSeq" id="WP_003014346.1">
    <property type="nucleotide sequence ID" value="NC_017463.1"/>
</dbReference>
<dbReference type="SMR" id="Q0BNR7"/>
<dbReference type="GeneID" id="75264251"/>
<dbReference type="KEGG" id="fth:FTH_0241"/>
<dbReference type="GO" id="GO:0022625">
    <property type="term" value="C:cytosolic large ribosomal subunit"/>
    <property type="evidence" value="ECO:0007669"/>
    <property type="project" value="TreeGrafter"/>
</dbReference>
<dbReference type="GO" id="GO:0070180">
    <property type="term" value="F:large ribosomal subunit rRNA binding"/>
    <property type="evidence" value="ECO:0007669"/>
    <property type="project" value="TreeGrafter"/>
</dbReference>
<dbReference type="GO" id="GO:0003735">
    <property type="term" value="F:structural constituent of ribosome"/>
    <property type="evidence" value="ECO:0007669"/>
    <property type="project" value="InterPro"/>
</dbReference>
<dbReference type="GO" id="GO:0006412">
    <property type="term" value="P:translation"/>
    <property type="evidence" value="ECO:0007669"/>
    <property type="project" value="UniProtKB-UniRule"/>
</dbReference>
<dbReference type="CDD" id="cd00337">
    <property type="entry name" value="Ribosomal_uL14"/>
    <property type="match status" value="1"/>
</dbReference>
<dbReference type="FunFam" id="2.40.150.20:FF:000001">
    <property type="entry name" value="50S ribosomal protein L14"/>
    <property type="match status" value="1"/>
</dbReference>
<dbReference type="Gene3D" id="2.40.150.20">
    <property type="entry name" value="Ribosomal protein L14"/>
    <property type="match status" value="1"/>
</dbReference>
<dbReference type="HAMAP" id="MF_01367">
    <property type="entry name" value="Ribosomal_uL14"/>
    <property type="match status" value="1"/>
</dbReference>
<dbReference type="InterPro" id="IPR000218">
    <property type="entry name" value="Ribosomal_uL14"/>
</dbReference>
<dbReference type="InterPro" id="IPR005745">
    <property type="entry name" value="Ribosomal_uL14_bac-type"/>
</dbReference>
<dbReference type="InterPro" id="IPR019972">
    <property type="entry name" value="Ribosomal_uL14_CS"/>
</dbReference>
<dbReference type="InterPro" id="IPR036853">
    <property type="entry name" value="Ribosomal_uL14_sf"/>
</dbReference>
<dbReference type="NCBIfam" id="TIGR01067">
    <property type="entry name" value="rplN_bact"/>
    <property type="match status" value="1"/>
</dbReference>
<dbReference type="PANTHER" id="PTHR11761">
    <property type="entry name" value="50S/60S RIBOSOMAL PROTEIN L14/L23"/>
    <property type="match status" value="1"/>
</dbReference>
<dbReference type="PANTHER" id="PTHR11761:SF3">
    <property type="entry name" value="LARGE RIBOSOMAL SUBUNIT PROTEIN UL14M"/>
    <property type="match status" value="1"/>
</dbReference>
<dbReference type="Pfam" id="PF00238">
    <property type="entry name" value="Ribosomal_L14"/>
    <property type="match status" value="1"/>
</dbReference>
<dbReference type="SMART" id="SM01374">
    <property type="entry name" value="Ribosomal_L14"/>
    <property type="match status" value="1"/>
</dbReference>
<dbReference type="SUPFAM" id="SSF50193">
    <property type="entry name" value="Ribosomal protein L14"/>
    <property type="match status" value="1"/>
</dbReference>
<dbReference type="PROSITE" id="PS00049">
    <property type="entry name" value="RIBOSOMAL_L14"/>
    <property type="match status" value="1"/>
</dbReference>
<comment type="function">
    <text evidence="1">Binds to 23S rRNA. Forms part of two intersubunit bridges in the 70S ribosome.</text>
</comment>
<comment type="subunit">
    <text evidence="1">Part of the 50S ribosomal subunit. Forms a cluster with proteins L3 and L19. In the 70S ribosome, L14 and L19 interact and together make contacts with the 16S rRNA in bridges B5 and B8.</text>
</comment>
<comment type="similarity">
    <text evidence="1">Belongs to the universal ribosomal protein uL14 family.</text>
</comment>
<gene>
    <name evidence="1" type="primary">rplN</name>
    <name type="ordered locus">FTH_0241</name>
</gene>
<evidence type="ECO:0000255" key="1">
    <source>
        <dbReference type="HAMAP-Rule" id="MF_01367"/>
    </source>
</evidence>
<evidence type="ECO:0000305" key="2"/>
<reference key="1">
    <citation type="journal article" date="2006" name="J. Bacteriol.">
        <title>Chromosome rearrangement and diversification of Francisella tularensis revealed by the type B (OSU18) genome sequence.</title>
        <authorList>
            <person name="Petrosino J.F."/>
            <person name="Xiang Q."/>
            <person name="Karpathy S.E."/>
            <person name="Jiang H."/>
            <person name="Yerrapragada S."/>
            <person name="Liu Y."/>
            <person name="Gioia J."/>
            <person name="Hemphill L."/>
            <person name="Gonzalez A."/>
            <person name="Raghavan T.M."/>
            <person name="Uzman A."/>
            <person name="Fox G.E."/>
            <person name="Highlander S."/>
            <person name="Reichard M."/>
            <person name="Morton R.J."/>
            <person name="Clinkenbeard K.D."/>
            <person name="Weinstock G.M."/>
        </authorList>
    </citation>
    <scope>NUCLEOTIDE SEQUENCE [LARGE SCALE GENOMIC DNA]</scope>
    <source>
        <strain>OSU18</strain>
    </source>
</reference>
<sequence length="122" mass="13235">MIQMQTELQVADNSGAKRVECIKVLGGSHRRYASIGDVIKVTVKEASPRGKAKKGSVYNAVVVRTAKGVRRKDGSKVRFDGNAAVLLNANGQPIGTRIFGPVTRELRTEKFMKIVSLAPEVL</sequence>
<accession>Q0BNR7</accession>
<keyword id="KW-0687">Ribonucleoprotein</keyword>
<keyword id="KW-0689">Ribosomal protein</keyword>
<keyword id="KW-0694">RNA-binding</keyword>
<keyword id="KW-0699">rRNA-binding</keyword>
<name>RL14_FRATO</name>
<organism>
    <name type="scientific">Francisella tularensis subsp. holarctica (strain OSU18)</name>
    <dbReference type="NCBI Taxonomy" id="393011"/>
    <lineage>
        <taxon>Bacteria</taxon>
        <taxon>Pseudomonadati</taxon>
        <taxon>Pseudomonadota</taxon>
        <taxon>Gammaproteobacteria</taxon>
        <taxon>Thiotrichales</taxon>
        <taxon>Francisellaceae</taxon>
        <taxon>Francisella</taxon>
    </lineage>
</organism>
<protein>
    <recommendedName>
        <fullName evidence="1">Large ribosomal subunit protein uL14</fullName>
    </recommendedName>
    <alternativeName>
        <fullName evidence="2">50S ribosomal protein L14</fullName>
    </alternativeName>
</protein>
<feature type="chain" id="PRO_0000266484" description="Large ribosomal subunit protein uL14">
    <location>
        <begin position="1"/>
        <end position="122"/>
    </location>
</feature>